<evidence type="ECO:0000255" key="1">
    <source>
        <dbReference type="HAMAP-Rule" id="MF_00425"/>
    </source>
</evidence>
<name>NQRA_HAHCH</name>
<gene>
    <name evidence="1" type="primary">nqrA</name>
    <name type="ordered locus">HCH_02685</name>
</gene>
<keyword id="KW-0406">Ion transport</keyword>
<keyword id="KW-0520">NAD</keyword>
<keyword id="KW-1185">Reference proteome</keyword>
<keyword id="KW-0915">Sodium</keyword>
<keyword id="KW-0739">Sodium transport</keyword>
<keyword id="KW-1278">Translocase</keyword>
<keyword id="KW-0813">Transport</keyword>
<keyword id="KW-0830">Ubiquinone</keyword>
<reference key="1">
    <citation type="journal article" date="2005" name="Nucleic Acids Res.">
        <title>Genomic blueprint of Hahella chejuensis, a marine microbe producing an algicidal agent.</title>
        <authorList>
            <person name="Jeong H."/>
            <person name="Yim J.H."/>
            <person name="Lee C."/>
            <person name="Choi S.-H."/>
            <person name="Park Y.K."/>
            <person name="Yoon S.H."/>
            <person name="Hur C.-G."/>
            <person name="Kang H.-Y."/>
            <person name="Kim D."/>
            <person name="Lee H.H."/>
            <person name="Park K.H."/>
            <person name="Park S.-H."/>
            <person name="Park H.-S."/>
            <person name="Lee H.K."/>
            <person name="Oh T.K."/>
            <person name="Kim J.F."/>
        </authorList>
    </citation>
    <scope>NUCLEOTIDE SEQUENCE [LARGE SCALE GENOMIC DNA]</scope>
    <source>
        <strain>KCTC 2396</strain>
    </source>
</reference>
<proteinExistence type="inferred from homology"/>
<dbReference type="EC" id="7.2.1.1" evidence="1"/>
<dbReference type="EMBL" id="CP000155">
    <property type="protein sequence ID" value="ABC29473.1"/>
    <property type="molecule type" value="Genomic_DNA"/>
</dbReference>
<dbReference type="RefSeq" id="WP_011396542.1">
    <property type="nucleotide sequence ID" value="NC_007645.1"/>
</dbReference>
<dbReference type="SMR" id="Q2SIQ1"/>
<dbReference type="STRING" id="349521.HCH_02685"/>
<dbReference type="KEGG" id="hch:HCH_02685"/>
<dbReference type="eggNOG" id="COG1726">
    <property type="taxonomic scope" value="Bacteria"/>
</dbReference>
<dbReference type="HOGENOM" id="CLU_046656_0_0_6"/>
<dbReference type="OrthoDB" id="9774536at2"/>
<dbReference type="Proteomes" id="UP000000238">
    <property type="component" value="Chromosome"/>
</dbReference>
<dbReference type="GO" id="GO:0016655">
    <property type="term" value="F:oxidoreductase activity, acting on NAD(P)H, quinone or similar compound as acceptor"/>
    <property type="evidence" value="ECO:0007669"/>
    <property type="project" value="UniProtKB-UniRule"/>
</dbReference>
<dbReference type="GO" id="GO:0006814">
    <property type="term" value="P:sodium ion transport"/>
    <property type="evidence" value="ECO:0007669"/>
    <property type="project" value="UniProtKB-UniRule"/>
</dbReference>
<dbReference type="HAMAP" id="MF_00425">
    <property type="entry name" value="NqrA"/>
    <property type="match status" value="1"/>
</dbReference>
<dbReference type="InterPro" id="IPR008703">
    <property type="entry name" value="NqrA"/>
</dbReference>
<dbReference type="InterPro" id="IPR056148">
    <property type="entry name" value="NQRA_2nd"/>
</dbReference>
<dbReference type="InterPro" id="IPR022615">
    <property type="entry name" value="NqrA_C_domain"/>
</dbReference>
<dbReference type="InterPro" id="IPR056147">
    <property type="entry name" value="NQRA_N"/>
</dbReference>
<dbReference type="NCBIfam" id="TIGR01936">
    <property type="entry name" value="nqrA"/>
    <property type="match status" value="1"/>
</dbReference>
<dbReference type="NCBIfam" id="NF003759">
    <property type="entry name" value="PRK05352.1-2"/>
    <property type="match status" value="1"/>
</dbReference>
<dbReference type="PANTHER" id="PTHR37839">
    <property type="entry name" value="NA(+)-TRANSLOCATING NADH-QUINONE REDUCTASE SUBUNIT A"/>
    <property type="match status" value="1"/>
</dbReference>
<dbReference type="PANTHER" id="PTHR37839:SF1">
    <property type="entry name" value="NA(+)-TRANSLOCATING NADH-QUINONE REDUCTASE SUBUNIT A"/>
    <property type="match status" value="1"/>
</dbReference>
<dbReference type="Pfam" id="PF24836">
    <property type="entry name" value="NQRA_2nd"/>
    <property type="match status" value="1"/>
</dbReference>
<dbReference type="Pfam" id="PF05896">
    <property type="entry name" value="NQRA_N"/>
    <property type="match status" value="1"/>
</dbReference>
<dbReference type="Pfam" id="PF11973">
    <property type="entry name" value="NQRA_SLBB"/>
    <property type="match status" value="1"/>
</dbReference>
<accession>Q2SIQ1</accession>
<feature type="chain" id="PRO_1000060117" description="Na(+)-translocating NADH-quinone reductase subunit A">
    <location>
        <begin position="1"/>
        <end position="447"/>
    </location>
</feature>
<sequence>MIKIKKGLDLPIAGAPAQVIEDGKPVTQVALIGFDYNGMKPTMEVKVGDRVKCGQLLFTDKKTEGVRYTSPASGVVSAVNRGERRVFQSIVIDIEGDDSEQFAQFSPEELPNLSREQVVENLVGSGEWTALRTRPYSKAPAIDAEPHSIFVTAMDSHPLSADPAVIINEAKADFKNGLVVLGKLTRGKVFVCARAGVNYDLPSGSNAVQEQFDGPHPAGLAGTHIHYLDPVNASKFVWTIGYQDVIAIGRLFTSGRKSVERVVALAGPMVSKPRLLRTRTGASLAQLTEGELKSSDVRLISGSVLGGRNAKGNVSFLGRFANQISCLEEGYKREFMGWLSPGSNKYSLLNIYLSKLNPGKLFNFTTTTNGSERAMVPVGSYEKVMPLDILPTQLLRSLVVGDTEMAQKLGCLELDEEDLSLCTFVCPGKYEYGPILRDSLTRIEKEG</sequence>
<comment type="function">
    <text evidence="1">NQR complex catalyzes the reduction of ubiquinone-1 to ubiquinol by two successive reactions, coupled with the transport of Na(+) ions from the cytoplasm to the periplasm. NqrA to NqrE are probably involved in the second step, the conversion of ubisemiquinone to ubiquinol.</text>
</comment>
<comment type="catalytic activity">
    <reaction evidence="1">
        <text>a ubiquinone + n Na(+)(in) + NADH + H(+) = a ubiquinol + n Na(+)(out) + NAD(+)</text>
        <dbReference type="Rhea" id="RHEA:47748"/>
        <dbReference type="Rhea" id="RHEA-COMP:9565"/>
        <dbReference type="Rhea" id="RHEA-COMP:9566"/>
        <dbReference type="ChEBI" id="CHEBI:15378"/>
        <dbReference type="ChEBI" id="CHEBI:16389"/>
        <dbReference type="ChEBI" id="CHEBI:17976"/>
        <dbReference type="ChEBI" id="CHEBI:29101"/>
        <dbReference type="ChEBI" id="CHEBI:57540"/>
        <dbReference type="ChEBI" id="CHEBI:57945"/>
        <dbReference type="EC" id="7.2.1.1"/>
    </reaction>
</comment>
<comment type="subunit">
    <text evidence="1">Composed of six subunits; NqrA, NqrB, NqrC, NqrD, NqrE and NqrF.</text>
</comment>
<comment type="similarity">
    <text evidence="1">Belongs to the NqrA family.</text>
</comment>
<organism>
    <name type="scientific">Hahella chejuensis (strain KCTC 2396)</name>
    <dbReference type="NCBI Taxonomy" id="349521"/>
    <lineage>
        <taxon>Bacteria</taxon>
        <taxon>Pseudomonadati</taxon>
        <taxon>Pseudomonadota</taxon>
        <taxon>Gammaproteobacteria</taxon>
        <taxon>Oceanospirillales</taxon>
        <taxon>Hahellaceae</taxon>
        <taxon>Hahella</taxon>
    </lineage>
</organism>
<protein>
    <recommendedName>
        <fullName evidence="1">Na(+)-translocating NADH-quinone reductase subunit A</fullName>
        <shortName evidence="1">Na(+)-NQR subunit A</shortName>
        <shortName evidence="1">Na(+)-translocating NQR subunit A</shortName>
        <ecNumber evidence="1">7.2.1.1</ecNumber>
    </recommendedName>
    <alternativeName>
        <fullName evidence="1">NQR complex subunit A</fullName>
    </alternativeName>
    <alternativeName>
        <fullName evidence="1">NQR-1 subunit A</fullName>
    </alternativeName>
</protein>